<name>YIDC_SHIDS</name>
<accession>Q329B2</accession>
<proteinExistence type="inferred from homology"/>
<reference key="1">
    <citation type="journal article" date="2005" name="Nucleic Acids Res.">
        <title>Genome dynamics and diversity of Shigella species, the etiologic agents of bacillary dysentery.</title>
        <authorList>
            <person name="Yang F."/>
            <person name="Yang J."/>
            <person name="Zhang X."/>
            <person name="Chen L."/>
            <person name="Jiang Y."/>
            <person name="Yan Y."/>
            <person name="Tang X."/>
            <person name="Wang J."/>
            <person name="Xiong Z."/>
            <person name="Dong J."/>
            <person name="Xue Y."/>
            <person name="Zhu Y."/>
            <person name="Xu X."/>
            <person name="Sun L."/>
            <person name="Chen S."/>
            <person name="Nie H."/>
            <person name="Peng J."/>
            <person name="Xu J."/>
            <person name="Wang Y."/>
            <person name="Yuan Z."/>
            <person name="Wen Y."/>
            <person name="Yao Z."/>
            <person name="Shen Y."/>
            <person name="Qiang B."/>
            <person name="Hou Y."/>
            <person name="Yu J."/>
            <person name="Jin Q."/>
        </authorList>
    </citation>
    <scope>NUCLEOTIDE SEQUENCE [LARGE SCALE GENOMIC DNA]</scope>
    <source>
        <strain>Sd197</strain>
    </source>
</reference>
<keyword id="KW-0997">Cell inner membrane</keyword>
<keyword id="KW-1003">Cell membrane</keyword>
<keyword id="KW-0143">Chaperone</keyword>
<keyword id="KW-0472">Membrane</keyword>
<keyword id="KW-0653">Protein transport</keyword>
<keyword id="KW-1185">Reference proteome</keyword>
<keyword id="KW-0812">Transmembrane</keyword>
<keyword id="KW-1133">Transmembrane helix</keyword>
<keyword id="KW-0813">Transport</keyword>
<protein>
    <recommendedName>
        <fullName evidence="1">Membrane protein insertase YidC</fullName>
    </recommendedName>
    <alternativeName>
        <fullName evidence="1">Foldase YidC</fullName>
    </alternativeName>
    <alternativeName>
        <fullName evidence="1">Membrane integrase YidC</fullName>
    </alternativeName>
    <alternativeName>
        <fullName evidence="1">Membrane protein YidC</fullName>
    </alternativeName>
</protein>
<sequence>MDSQRNLLVIALLFVSFMIWQAWEQDKNPQPQAQQTTQTTTTAAGSAADQGVPASGQGKLISVKTDVLDLTINTRGGDVEQALLPAYPKELNSTQPFQLLETSPQFIYQAQSGLTGRDGPDNPANGPRPLYNVEKDAYVLAEGQNELQVPMTYTDAAGNTFTKTFVLKRGDYAVNVNYNVQNAGEKPLEISSFGQLKQSITLPPHLDTGSSNFALHTFRGAAYSTPDEKYEKYKFDTIADNENLNISSKGGWVAMLQQYFATAWSPHNDGTNNFYTANLGNGIAAIGYKSQPVLVQPGQTGAMNSTLWVGPEIQDKMAAVAPHLDLTVDYGWLWFISQPLFKLLKWIHSFVGNWGFSIIIITFIVRGIMYPLTKAQYTSMAKMRMLQPKIQAMRERLGDDKQRISQEMMALYKAEKVNPLGGCFPLLIQMPIFLALYYMLMGSVELRQAPFALWIHDLSAQDPYYILPILMGVTMFFIQKMSPTTVTDPMQQKIMTFMPVIFTVFFLWFPSGLVLYYIVSNLVTIIQQQLIYRGLEKRGLHSREKKKS</sequence>
<comment type="function">
    <text evidence="1">Required for the insertion and/or proper folding and/or complex formation of integral membrane proteins into the membrane. Involved in integration of membrane proteins that insert both dependently and independently of the Sec translocase complex, as well as at least some lipoproteins. Aids folding of multispanning membrane proteins.</text>
</comment>
<comment type="subunit">
    <text evidence="1">Interacts with the Sec translocase complex via SecD. Specifically interacts with transmembrane segments of nascent integral membrane proteins during membrane integration.</text>
</comment>
<comment type="subcellular location">
    <subcellularLocation>
        <location evidence="1">Cell inner membrane</location>
        <topology evidence="1">Multi-pass membrane protein</topology>
    </subcellularLocation>
</comment>
<comment type="similarity">
    <text evidence="1">Belongs to the OXA1/ALB3/YidC family. Type 1 subfamily.</text>
</comment>
<evidence type="ECO:0000255" key="1">
    <source>
        <dbReference type="HAMAP-Rule" id="MF_01810"/>
    </source>
</evidence>
<evidence type="ECO:0000256" key="2">
    <source>
        <dbReference type="SAM" id="MobiDB-lite"/>
    </source>
</evidence>
<organism>
    <name type="scientific">Shigella dysenteriae serotype 1 (strain Sd197)</name>
    <dbReference type="NCBI Taxonomy" id="300267"/>
    <lineage>
        <taxon>Bacteria</taxon>
        <taxon>Pseudomonadati</taxon>
        <taxon>Pseudomonadota</taxon>
        <taxon>Gammaproteobacteria</taxon>
        <taxon>Enterobacterales</taxon>
        <taxon>Enterobacteriaceae</taxon>
        <taxon>Shigella</taxon>
    </lineage>
</organism>
<feature type="chain" id="PRO_1000070177" description="Membrane protein insertase YidC">
    <location>
        <begin position="1"/>
        <end position="548"/>
    </location>
</feature>
<feature type="transmembrane region" description="Helical" evidence="1">
    <location>
        <begin position="6"/>
        <end position="26"/>
    </location>
</feature>
<feature type="transmembrane region" description="Helical" evidence="1">
    <location>
        <begin position="350"/>
        <end position="370"/>
    </location>
</feature>
<feature type="transmembrane region" description="Helical" evidence="1">
    <location>
        <begin position="420"/>
        <end position="440"/>
    </location>
</feature>
<feature type="transmembrane region" description="Helical" evidence="1">
    <location>
        <begin position="458"/>
        <end position="478"/>
    </location>
</feature>
<feature type="transmembrane region" description="Helical" evidence="1">
    <location>
        <begin position="499"/>
        <end position="519"/>
    </location>
</feature>
<feature type="region of interest" description="Disordered" evidence="2">
    <location>
        <begin position="28"/>
        <end position="55"/>
    </location>
</feature>
<feature type="compositionally biased region" description="Low complexity" evidence="2">
    <location>
        <begin position="30"/>
        <end position="50"/>
    </location>
</feature>
<dbReference type="EMBL" id="CP000034">
    <property type="protein sequence ID" value="ABB64093.1"/>
    <property type="molecule type" value="Genomic_DNA"/>
</dbReference>
<dbReference type="RefSeq" id="WP_000378254.1">
    <property type="nucleotide sequence ID" value="NC_007606.1"/>
</dbReference>
<dbReference type="RefSeq" id="YP_405584.1">
    <property type="nucleotide sequence ID" value="NC_007606.1"/>
</dbReference>
<dbReference type="SMR" id="Q329B2"/>
<dbReference type="STRING" id="300267.SDY_4188"/>
<dbReference type="EnsemblBacteria" id="ABB64093">
    <property type="protein sequence ID" value="ABB64093"/>
    <property type="gene ID" value="SDY_4188"/>
</dbReference>
<dbReference type="KEGG" id="sdy:SDY_4188"/>
<dbReference type="PATRIC" id="fig|300267.13.peg.4925"/>
<dbReference type="HOGENOM" id="CLU_016535_3_0_6"/>
<dbReference type="Proteomes" id="UP000002716">
    <property type="component" value="Chromosome"/>
</dbReference>
<dbReference type="GO" id="GO:0005886">
    <property type="term" value="C:plasma membrane"/>
    <property type="evidence" value="ECO:0007669"/>
    <property type="project" value="UniProtKB-SubCell"/>
</dbReference>
<dbReference type="GO" id="GO:0032977">
    <property type="term" value="F:membrane insertase activity"/>
    <property type="evidence" value="ECO:0007669"/>
    <property type="project" value="InterPro"/>
</dbReference>
<dbReference type="GO" id="GO:0051205">
    <property type="term" value="P:protein insertion into membrane"/>
    <property type="evidence" value="ECO:0007669"/>
    <property type="project" value="TreeGrafter"/>
</dbReference>
<dbReference type="GO" id="GO:0015031">
    <property type="term" value="P:protein transport"/>
    <property type="evidence" value="ECO:0007669"/>
    <property type="project" value="UniProtKB-KW"/>
</dbReference>
<dbReference type="CDD" id="cd20070">
    <property type="entry name" value="5TM_YidC_Alb3"/>
    <property type="match status" value="1"/>
</dbReference>
<dbReference type="CDD" id="cd19961">
    <property type="entry name" value="EcYidC-like_peri"/>
    <property type="match status" value="1"/>
</dbReference>
<dbReference type="FunFam" id="2.70.98.90:FF:000001">
    <property type="entry name" value="Membrane protein insertase YidC"/>
    <property type="match status" value="1"/>
</dbReference>
<dbReference type="Gene3D" id="2.70.98.90">
    <property type="match status" value="1"/>
</dbReference>
<dbReference type="HAMAP" id="MF_01810">
    <property type="entry name" value="YidC_type1"/>
    <property type="match status" value="1"/>
</dbReference>
<dbReference type="InterPro" id="IPR019998">
    <property type="entry name" value="Membr_insert_YidC"/>
</dbReference>
<dbReference type="InterPro" id="IPR028053">
    <property type="entry name" value="Membr_insert_YidC_N"/>
</dbReference>
<dbReference type="InterPro" id="IPR001708">
    <property type="entry name" value="YidC/ALB3/OXA1/COX18"/>
</dbReference>
<dbReference type="InterPro" id="IPR028055">
    <property type="entry name" value="YidC/Oxa/ALB_C"/>
</dbReference>
<dbReference type="InterPro" id="IPR047196">
    <property type="entry name" value="YidC_ALB_C"/>
</dbReference>
<dbReference type="InterPro" id="IPR038221">
    <property type="entry name" value="YidC_periplasmic_sf"/>
</dbReference>
<dbReference type="NCBIfam" id="NF002351">
    <property type="entry name" value="PRK01318.1-1"/>
    <property type="match status" value="1"/>
</dbReference>
<dbReference type="NCBIfam" id="NF002352">
    <property type="entry name" value="PRK01318.1-3"/>
    <property type="match status" value="1"/>
</dbReference>
<dbReference type="NCBIfam" id="NF002353">
    <property type="entry name" value="PRK01318.1-4"/>
    <property type="match status" value="1"/>
</dbReference>
<dbReference type="NCBIfam" id="TIGR03593">
    <property type="entry name" value="yidC_nterm"/>
    <property type="match status" value="1"/>
</dbReference>
<dbReference type="NCBIfam" id="TIGR03592">
    <property type="entry name" value="yidC_oxa1_cterm"/>
    <property type="match status" value="1"/>
</dbReference>
<dbReference type="PANTHER" id="PTHR12428:SF65">
    <property type="entry name" value="CYTOCHROME C OXIDASE ASSEMBLY PROTEIN COX18, MITOCHONDRIAL"/>
    <property type="match status" value="1"/>
</dbReference>
<dbReference type="PANTHER" id="PTHR12428">
    <property type="entry name" value="OXA1"/>
    <property type="match status" value="1"/>
</dbReference>
<dbReference type="Pfam" id="PF02096">
    <property type="entry name" value="60KD_IMP"/>
    <property type="match status" value="1"/>
</dbReference>
<dbReference type="Pfam" id="PF14849">
    <property type="entry name" value="YidC_periplas"/>
    <property type="match status" value="1"/>
</dbReference>
<dbReference type="PRINTS" id="PR00701">
    <property type="entry name" value="60KDINNERMP"/>
</dbReference>
<dbReference type="PRINTS" id="PR01900">
    <property type="entry name" value="YIDCPROTEIN"/>
</dbReference>
<gene>
    <name evidence="1" type="primary">yidC</name>
    <name type="ordered locus">SDY_4188</name>
</gene>